<reference key="1">
    <citation type="submission" date="2004-07" db="EMBL/GenBank/DDBJ databases">
        <authorList>
            <consortium name="NIH - Xenopus Gene Collection (XGC) project"/>
        </authorList>
    </citation>
    <scope>NUCLEOTIDE SEQUENCE [LARGE SCALE MRNA]</scope>
    <source>
        <tissue>Kidney</tissue>
    </source>
</reference>
<comment type="function">
    <text evidence="1">Key enzyme in myo-inositol biosynthesis pathway that catalyzes the conversion of glucose 6-phosphate to 1-myo-inositol 1-phosphate in a NAD-dependent manner. Rate-limiting enzyme in the synthesis of all inositol-containing compounds (By similarity).</text>
</comment>
<comment type="catalytic activity">
    <reaction>
        <text>D-glucose 6-phosphate = 1D-myo-inositol 3-phosphate</text>
        <dbReference type="Rhea" id="RHEA:10716"/>
        <dbReference type="ChEBI" id="CHEBI:58401"/>
        <dbReference type="ChEBI" id="CHEBI:61548"/>
        <dbReference type="EC" id="5.5.1.4"/>
    </reaction>
</comment>
<comment type="cofactor">
    <cofactor evidence="1">
        <name>NAD(+)</name>
        <dbReference type="ChEBI" id="CHEBI:57540"/>
    </cofactor>
</comment>
<comment type="pathway">
    <text>Polyol metabolism; myo-inositol biosynthesis; myo-inositol from D-glucose 6-phosphate: step 1/2.</text>
</comment>
<comment type="subcellular location">
    <subcellularLocation>
        <location evidence="1">Cytoplasm</location>
    </subcellularLocation>
</comment>
<comment type="similarity">
    <text evidence="2">Belongs to the myo-inositol 1-phosphate synthase family.</text>
</comment>
<comment type="sequence caution" evidence="2">
    <conflict type="erroneous initiation">
        <sequence resource="EMBL-CDS" id="AAH77437"/>
    </conflict>
</comment>
<name>INO1B_XENLA</name>
<proteinExistence type="evidence at transcript level"/>
<sequence>MAEMFKVESPHVRYLKDVIEADYSYDTTQVYEEKGVTKVKPCSTKFTFHTERKVPKLGVMLVGWGGNNGTTVTAAVLANRLGLSWMTKTGKKVANYYGSLFQSSTVCLGRGSSGEVFVPFRDLLPMVNPNDLVFDGWDISSLNLADAMFRAEVLDWQLQEQLRPYMEKMKPRPSIYIPEFIAANQEDRADHTIHGTKAEQVQKIREDIQDFKRTSGVDKVIVLWTANTERFCDIIPGVNDTADNLLKAIENGLEVSPSTMFAVASILEGCAFINGSPQNTFVPGAIELAIRHNVFIGGDDFKSGQTKIKSVLMDFLVSAGLKPVSIVSYNHLGNNDGKNLSAPQQFRSKEISKSNVVDDMVQSNPILYGPNEKPDHCVVIKYVPYVGDSKRAMDEYTSEIMMGGANTIVLHNTCEDSLLASPIFLDLVLLTELCQRITFRTETDQEFQTFHSVLSILSFLCKAPLVPAGTPVVNAFFRQRNCIENILRACLGLSPQNHMMLEHKMQRSFVSLKRPSVDCNAYPISSKKGNGVNGFHPPGISNGLSHSNGLGKTVISSDIEIEN</sequence>
<evidence type="ECO:0000250" key="1"/>
<evidence type="ECO:0000305" key="2"/>
<keyword id="KW-0963">Cytoplasm</keyword>
<keyword id="KW-0398">Inositol biosynthesis</keyword>
<keyword id="KW-0413">Isomerase</keyword>
<keyword id="KW-0444">Lipid biosynthesis</keyword>
<keyword id="KW-0443">Lipid metabolism</keyword>
<keyword id="KW-0520">NAD</keyword>
<keyword id="KW-0594">Phospholipid biosynthesis</keyword>
<keyword id="KW-1208">Phospholipid metabolism</keyword>
<keyword id="KW-1185">Reference proteome</keyword>
<protein>
    <recommendedName>
        <fullName>Inositol-3-phosphate synthase 1-B</fullName>
        <shortName>IPS 1-B</shortName>
        <ecNumber>5.5.1.4</ecNumber>
    </recommendedName>
    <alternativeName>
        <fullName>Myo-inositol 1-phosphate synthase B</fullName>
        <shortName>MI-1-P synthase B</shortName>
        <shortName>MIP synthase B</shortName>
    </alternativeName>
</protein>
<gene>
    <name type="primary">isyna1-b</name>
    <name type="synonym">ino1-b</name>
</gene>
<dbReference type="EC" id="5.5.1.4"/>
<dbReference type="EMBL" id="BC077437">
    <property type="protein sequence ID" value="AAH77437.1"/>
    <property type="status" value="ALT_INIT"/>
    <property type="molecule type" value="mRNA"/>
</dbReference>
<dbReference type="RefSeq" id="NP_001086783.2">
    <property type="nucleotide sequence ID" value="NM_001093314.1"/>
</dbReference>
<dbReference type="RefSeq" id="XP_018101999.1">
    <property type="nucleotide sequence ID" value="XM_018246510.1"/>
</dbReference>
<dbReference type="RefSeq" id="XP_018102005.1">
    <property type="nucleotide sequence ID" value="XM_018246516.1"/>
</dbReference>
<dbReference type="SMR" id="Q6DDT1"/>
<dbReference type="DNASU" id="446618"/>
<dbReference type="GeneID" id="446618"/>
<dbReference type="KEGG" id="xla:446618"/>
<dbReference type="AGR" id="Xenbase:XB-GENE-6255674"/>
<dbReference type="CTD" id="446618"/>
<dbReference type="Xenbase" id="XB-GENE-6255674">
    <property type="gene designation" value="isyna1.L"/>
</dbReference>
<dbReference type="OMA" id="CTRPRDW"/>
<dbReference type="OrthoDB" id="2887at2759"/>
<dbReference type="UniPathway" id="UPA00823">
    <property type="reaction ID" value="UER00787"/>
</dbReference>
<dbReference type="Proteomes" id="UP000186698">
    <property type="component" value="Chromosome 1L"/>
</dbReference>
<dbReference type="Bgee" id="446618">
    <property type="expression patterns" value="Expressed in kidney and 19 other cell types or tissues"/>
</dbReference>
<dbReference type="GO" id="GO:0005737">
    <property type="term" value="C:cytoplasm"/>
    <property type="evidence" value="ECO:0000318"/>
    <property type="project" value="GO_Central"/>
</dbReference>
<dbReference type="GO" id="GO:0004512">
    <property type="term" value="F:inositol-3-phosphate synthase activity"/>
    <property type="evidence" value="ECO:0000318"/>
    <property type="project" value="GO_Central"/>
</dbReference>
<dbReference type="GO" id="GO:0006021">
    <property type="term" value="P:inositol biosynthetic process"/>
    <property type="evidence" value="ECO:0000318"/>
    <property type="project" value="GO_Central"/>
</dbReference>
<dbReference type="GO" id="GO:0008654">
    <property type="term" value="P:phospholipid biosynthetic process"/>
    <property type="evidence" value="ECO:0007669"/>
    <property type="project" value="UniProtKB-KW"/>
</dbReference>
<dbReference type="FunFam" id="3.40.50.720:FF:000069">
    <property type="entry name" value="Inositol-3-phosphate synthase 1"/>
    <property type="match status" value="1"/>
</dbReference>
<dbReference type="FunFam" id="3.40.50.720:FF:000171">
    <property type="entry name" value="inositol-3-phosphate synthase 1"/>
    <property type="match status" value="1"/>
</dbReference>
<dbReference type="FunFam" id="3.30.360.10:FF:000055">
    <property type="entry name" value="Putative myo-inositol-1-phosphate synthase"/>
    <property type="match status" value="1"/>
</dbReference>
<dbReference type="Gene3D" id="3.40.50.720">
    <property type="entry name" value="NAD(P)-binding Rossmann-like Domain"/>
    <property type="match status" value="2"/>
</dbReference>
<dbReference type="InterPro" id="IPR002587">
    <property type="entry name" value="Myo-inos-1-P_Synthase"/>
</dbReference>
<dbReference type="InterPro" id="IPR013021">
    <property type="entry name" value="Myo-inos-1-P_Synthase_GAPDH"/>
</dbReference>
<dbReference type="InterPro" id="IPR036291">
    <property type="entry name" value="NAD(P)-bd_dom_sf"/>
</dbReference>
<dbReference type="PANTHER" id="PTHR11510">
    <property type="entry name" value="MYO-INOSITOL-1 PHOSPHATE SYNTHASE"/>
    <property type="match status" value="1"/>
</dbReference>
<dbReference type="Pfam" id="PF01658">
    <property type="entry name" value="Inos-1-P_synth"/>
    <property type="match status" value="1"/>
</dbReference>
<dbReference type="Pfam" id="PF07994">
    <property type="entry name" value="NAD_binding_5"/>
    <property type="match status" value="1"/>
</dbReference>
<dbReference type="PIRSF" id="PIRSF015578">
    <property type="entry name" value="Myoinos-ppht_syn"/>
    <property type="match status" value="1"/>
</dbReference>
<dbReference type="SUPFAM" id="SSF55347">
    <property type="entry name" value="Glyceraldehyde-3-phosphate dehydrogenase-like, C-terminal domain"/>
    <property type="match status" value="1"/>
</dbReference>
<dbReference type="SUPFAM" id="SSF51735">
    <property type="entry name" value="NAD(P)-binding Rossmann-fold domains"/>
    <property type="match status" value="1"/>
</dbReference>
<accession>Q6DDT1</accession>
<organism>
    <name type="scientific">Xenopus laevis</name>
    <name type="common">African clawed frog</name>
    <dbReference type="NCBI Taxonomy" id="8355"/>
    <lineage>
        <taxon>Eukaryota</taxon>
        <taxon>Metazoa</taxon>
        <taxon>Chordata</taxon>
        <taxon>Craniata</taxon>
        <taxon>Vertebrata</taxon>
        <taxon>Euteleostomi</taxon>
        <taxon>Amphibia</taxon>
        <taxon>Batrachia</taxon>
        <taxon>Anura</taxon>
        <taxon>Pipoidea</taxon>
        <taxon>Pipidae</taxon>
        <taxon>Xenopodinae</taxon>
        <taxon>Xenopus</taxon>
        <taxon>Xenopus</taxon>
    </lineage>
</organism>
<feature type="chain" id="PRO_0000324633" description="Inositol-3-phosphate synthase 1-B">
    <location>
        <begin position="1"/>
        <end position="563"/>
    </location>
</feature>